<feature type="chain" id="PRO_1000051272" description="Small ribosomal subunit protein uS9">
    <location>
        <begin position="1"/>
        <end position="167"/>
    </location>
</feature>
<feature type="region of interest" description="Disordered" evidence="2">
    <location>
        <begin position="136"/>
        <end position="167"/>
    </location>
</feature>
<feature type="compositionally biased region" description="Basic and acidic residues" evidence="2">
    <location>
        <begin position="143"/>
        <end position="152"/>
    </location>
</feature>
<feature type="compositionally biased region" description="Basic residues" evidence="2">
    <location>
        <begin position="153"/>
        <end position="167"/>
    </location>
</feature>
<protein>
    <recommendedName>
        <fullName evidence="1">Small ribosomal subunit protein uS9</fullName>
    </recommendedName>
    <alternativeName>
        <fullName evidence="3">30S ribosomal protein S9</fullName>
    </alternativeName>
</protein>
<dbReference type="EMBL" id="AP006618">
    <property type="protein sequence ID" value="BAD55712.1"/>
    <property type="molecule type" value="Genomic_DNA"/>
</dbReference>
<dbReference type="SMR" id="Q5Z1H9"/>
<dbReference type="STRING" id="247156.NFA_8670"/>
<dbReference type="KEGG" id="nfa:NFA_8670"/>
<dbReference type="eggNOG" id="COG0103">
    <property type="taxonomic scope" value="Bacteria"/>
</dbReference>
<dbReference type="HOGENOM" id="CLU_046483_2_0_11"/>
<dbReference type="OrthoDB" id="9803965at2"/>
<dbReference type="Proteomes" id="UP000006820">
    <property type="component" value="Chromosome"/>
</dbReference>
<dbReference type="GO" id="GO:0005737">
    <property type="term" value="C:cytoplasm"/>
    <property type="evidence" value="ECO:0007669"/>
    <property type="project" value="UniProtKB-ARBA"/>
</dbReference>
<dbReference type="GO" id="GO:0015935">
    <property type="term" value="C:small ribosomal subunit"/>
    <property type="evidence" value="ECO:0007669"/>
    <property type="project" value="TreeGrafter"/>
</dbReference>
<dbReference type="GO" id="GO:0003723">
    <property type="term" value="F:RNA binding"/>
    <property type="evidence" value="ECO:0007669"/>
    <property type="project" value="TreeGrafter"/>
</dbReference>
<dbReference type="GO" id="GO:0003735">
    <property type="term" value="F:structural constituent of ribosome"/>
    <property type="evidence" value="ECO:0007669"/>
    <property type="project" value="InterPro"/>
</dbReference>
<dbReference type="GO" id="GO:0006412">
    <property type="term" value="P:translation"/>
    <property type="evidence" value="ECO:0007669"/>
    <property type="project" value="UniProtKB-UniRule"/>
</dbReference>
<dbReference type="FunFam" id="3.30.230.10:FF:000001">
    <property type="entry name" value="30S ribosomal protein S9"/>
    <property type="match status" value="1"/>
</dbReference>
<dbReference type="Gene3D" id="3.30.230.10">
    <property type="match status" value="1"/>
</dbReference>
<dbReference type="HAMAP" id="MF_00532_B">
    <property type="entry name" value="Ribosomal_uS9_B"/>
    <property type="match status" value="1"/>
</dbReference>
<dbReference type="InterPro" id="IPR020568">
    <property type="entry name" value="Ribosomal_Su5_D2-typ_SF"/>
</dbReference>
<dbReference type="InterPro" id="IPR000754">
    <property type="entry name" value="Ribosomal_uS9"/>
</dbReference>
<dbReference type="InterPro" id="IPR023035">
    <property type="entry name" value="Ribosomal_uS9_bac/plastid"/>
</dbReference>
<dbReference type="InterPro" id="IPR020574">
    <property type="entry name" value="Ribosomal_uS9_CS"/>
</dbReference>
<dbReference type="InterPro" id="IPR014721">
    <property type="entry name" value="Ribsml_uS5_D2-typ_fold_subgr"/>
</dbReference>
<dbReference type="NCBIfam" id="NF001099">
    <property type="entry name" value="PRK00132.1"/>
    <property type="match status" value="1"/>
</dbReference>
<dbReference type="PANTHER" id="PTHR21569">
    <property type="entry name" value="RIBOSOMAL PROTEIN S9"/>
    <property type="match status" value="1"/>
</dbReference>
<dbReference type="PANTHER" id="PTHR21569:SF1">
    <property type="entry name" value="SMALL RIBOSOMAL SUBUNIT PROTEIN US9M"/>
    <property type="match status" value="1"/>
</dbReference>
<dbReference type="Pfam" id="PF00380">
    <property type="entry name" value="Ribosomal_S9"/>
    <property type="match status" value="1"/>
</dbReference>
<dbReference type="SUPFAM" id="SSF54211">
    <property type="entry name" value="Ribosomal protein S5 domain 2-like"/>
    <property type="match status" value="1"/>
</dbReference>
<dbReference type="PROSITE" id="PS00360">
    <property type="entry name" value="RIBOSOMAL_S9"/>
    <property type="match status" value="1"/>
</dbReference>
<organism>
    <name type="scientific">Nocardia farcinica (strain IFM 10152)</name>
    <dbReference type="NCBI Taxonomy" id="247156"/>
    <lineage>
        <taxon>Bacteria</taxon>
        <taxon>Bacillati</taxon>
        <taxon>Actinomycetota</taxon>
        <taxon>Actinomycetes</taxon>
        <taxon>Mycobacteriales</taxon>
        <taxon>Nocardiaceae</taxon>
        <taxon>Nocardia</taxon>
    </lineage>
</organism>
<accession>Q5Z1H9</accession>
<proteinExistence type="inferred from homology"/>
<sequence>MTAPEEFNEDYTAEDAAVEVVEEDYGYEAEPATYAPVVIDRPVQTVGRRKEAVVRVRLVPGTGQFVLNGRSIEDYFPNKVHQQLVKSPLVTVERTESFDIHARLVGGGPSGQAGALRLAIARALIEVTPEDRPALKRAGFLTRDPRATERKKYGLKKARKAPQYSKR</sequence>
<name>RS9_NOCFA</name>
<comment type="similarity">
    <text evidence="1">Belongs to the universal ribosomal protein uS9 family.</text>
</comment>
<keyword id="KW-1185">Reference proteome</keyword>
<keyword id="KW-0687">Ribonucleoprotein</keyword>
<keyword id="KW-0689">Ribosomal protein</keyword>
<reference key="1">
    <citation type="journal article" date="2004" name="Proc. Natl. Acad. Sci. U.S.A.">
        <title>The complete genomic sequence of Nocardia farcinica IFM 10152.</title>
        <authorList>
            <person name="Ishikawa J."/>
            <person name="Yamashita A."/>
            <person name="Mikami Y."/>
            <person name="Hoshino Y."/>
            <person name="Kurita H."/>
            <person name="Hotta K."/>
            <person name="Shiba T."/>
            <person name="Hattori M."/>
        </authorList>
    </citation>
    <scope>NUCLEOTIDE SEQUENCE [LARGE SCALE GENOMIC DNA]</scope>
    <source>
        <strain>IFM 10152</strain>
    </source>
</reference>
<evidence type="ECO:0000255" key="1">
    <source>
        <dbReference type="HAMAP-Rule" id="MF_00532"/>
    </source>
</evidence>
<evidence type="ECO:0000256" key="2">
    <source>
        <dbReference type="SAM" id="MobiDB-lite"/>
    </source>
</evidence>
<evidence type="ECO:0000305" key="3"/>
<gene>
    <name evidence="1" type="primary">rpsI</name>
    <name type="ordered locus">NFA_8670</name>
</gene>